<dbReference type="EC" id="2.7.4.3" evidence="1"/>
<dbReference type="EMBL" id="AF222894">
    <property type="protein sequence ID" value="AAF30660.1"/>
    <property type="molecule type" value="Genomic_DNA"/>
</dbReference>
<dbReference type="RefSeq" id="WP_006688832.1">
    <property type="nucleotide sequence ID" value="NC_002162.1"/>
</dbReference>
<dbReference type="SMR" id="Q9PQP0"/>
<dbReference type="STRING" id="273119.UU251"/>
<dbReference type="EnsemblBacteria" id="AAF30660">
    <property type="protein sequence ID" value="AAF30660"/>
    <property type="gene ID" value="UU251"/>
</dbReference>
<dbReference type="GeneID" id="29672664"/>
<dbReference type="KEGG" id="uur:UU251"/>
<dbReference type="eggNOG" id="COG0563">
    <property type="taxonomic scope" value="Bacteria"/>
</dbReference>
<dbReference type="HOGENOM" id="CLU_032354_1_2_14"/>
<dbReference type="OrthoDB" id="9805030at2"/>
<dbReference type="UniPathway" id="UPA00588">
    <property type="reaction ID" value="UER00649"/>
</dbReference>
<dbReference type="Proteomes" id="UP000000423">
    <property type="component" value="Chromosome"/>
</dbReference>
<dbReference type="GO" id="GO:0005737">
    <property type="term" value="C:cytoplasm"/>
    <property type="evidence" value="ECO:0007669"/>
    <property type="project" value="UniProtKB-SubCell"/>
</dbReference>
<dbReference type="GO" id="GO:0004017">
    <property type="term" value="F:adenylate kinase activity"/>
    <property type="evidence" value="ECO:0007669"/>
    <property type="project" value="UniProtKB-UniRule"/>
</dbReference>
<dbReference type="GO" id="GO:0005524">
    <property type="term" value="F:ATP binding"/>
    <property type="evidence" value="ECO:0007669"/>
    <property type="project" value="UniProtKB-UniRule"/>
</dbReference>
<dbReference type="GO" id="GO:0008270">
    <property type="term" value="F:zinc ion binding"/>
    <property type="evidence" value="ECO:0007669"/>
    <property type="project" value="UniProtKB-UniRule"/>
</dbReference>
<dbReference type="GO" id="GO:0044209">
    <property type="term" value="P:AMP salvage"/>
    <property type="evidence" value="ECO:0007669"/>
    <property type="project" value="UniProtKB-UniRule"/>
</dbReference>
<dbReference type="CDD" id="cd01428">
    <property type="entry name" value="ADK"/>
    <property type="match status" value="1"/>
</dbReference>
<dbReference type="Gene3D" id="3.40.50.300">
    <property type="entry name" value="P-loop containing nucleotide triphosphate hydrolases"/>
    <property type="match status" value="1"/>
</dbReference>
<dbReference type="HAMAP" id="MF_00235">
    <property type="entry name" value="Adenylate_kinase_Adk"/>
    <property type="match status" value="1"/>
</dbReference>
<dbReference type="InterPro" id="IPR006259">
    <property type="entry name" value="Adenyl_kin_sub"/>
</dbReference>
<dbReference type="InterPro" id="IPR000850">
    <property type="entry name" value="Adenylat/UMP-CMP_kin"/>
</dbReference>
<dbReference type="InterPro" id="IPR033690">
    <property type="entry name" value="Adenylat_kinase_CS"/>
</dbReference>
<dbReference type="InterPro" id="IPR007862">
    <property type="entry name" value="Adenylate_kinase_lid-dom"/>
</dbReference>
<dbReference type="InterPro" id="IPR036193">
    <property type="entry name" value="ADK_active_lid_dom_sf"/>
</dbReference>
<dbReference type="InterPro" id="IPR027417">
    <property type="entry name" value="P-loop_NTPase"/>
</dbReference>
<dbReference type="NCBIfam" id="TIGR01351">
    <property type="entry name" value="adk"/>
    <property type="match status" value="1"/>
</dbReference>
<dbReference type="PANTHER" id="PTHR23359">
    <property type="entry name" value="NUCLEOTIDE KINASE"/>
    <property type="match status" value="1"/>
</dbReference>
<dbReference type="Pfam" id="PF00406">
    <property type="entry name" value="ADK"/>
    <property type="match status" value="1"/>
</dbReference>
<dbReference type="Pfam" id="PF05191">
    <property type="entry name" value="ADK_lid"/>
    <property type="match status" value="1"/>
</dbReference>
<dbReference type="PRINTS" id="PR00094">
    <property type="entry name" value="ADENYLTKNASE"/>
</dbReference>
<dbReference type="SUPFAM" id="SSF57774">
    <property type="entry name" value="Microbial and mitochondrial ADK, insert 'zinc finger' domain"/>
    <property type="match status" value="1"/>
</dbReference>
<dbReference type="SUPFAM" id="SSF52540">
    <property type="entry name" value="P-loop containing nucleoside triphosphate hydrolases"/>
    <property type="match status" value="1"/>
</dbReference>
<dbReference type="PROSITE" id="PS00113">
    <property type="entry name" value="ADENYLATE_KINASE"/>
    <property type="match status" value="1"/>
</dbReference>
<name>KAD_UREPA</name>
<reference key="1">
    <citation type="journal article" date="2000" name="Nature">
        <title>The complete sequence of the mucosal pathogen Ureaplasma urealyticum.</title>
        <authorList>
            <person name="Glass J.I."/>
            <person name="Lefkowitz E.J."/>
            <person name="Glass J.S."/>
            <person name="Heiner C.R."/>
            <person name="Chen E.Y."/>
            <person name="Cassell G.H."/>
        </authorList>
    </citation>
    <scope>NUCLEOTIDE SEQUENCE [LARGE SCALE GENOMIC DNA]</scope>
    <source>
        <strain>ATCC 700970</strain>
    </source>
</reference>
<protein>
    <recommendedName>
        <fullName evidence="1">Adenylate kinase</fullName>
        <shortName evidence="1">AK</shortName>
        <ecNumber evidence="1">2.7.4.3</ecNumber>
    </recommendedName>
    <alternativeName>
        <fullName evidence="1">ATP-AMP transphosphorylase</fullName>
    </alternativeName>
    <alternativeName>
        <fullName evidence="1">ATP:AMP phosphotransferase</fullName>
    </alternativeName>
    <alternativeName>
        <fullName evidence="1">Adenylate monophosphate kinase</fullName>
    </alternativeName>
</protein>
<organism>
    <name type="scientific">Ureaplasma parvum serovar 3 (strain ATCC 700970)</name>
    <dbReference type="NCBI Taxonomy" id="273119"/>
    <lineage>
        <taxon>Bacteria</taxon>
        <taxon>Bacillati</taxon>
        <taxon>Mycoplasmatota</taxon>
        <taxon>Mycoplasmoidales</taxon>
        <taxon>Mycoplasmoidaceae</taxon>
        <taxon>Ureaplasma</taxon>
    </lineage>
</organism>
<proteinExistence type="inferred from homology"/>
<gene>
    <name evidence="1" type="primary">adk</name>
    <name type="ordered locus">UU251</name>
</gene>
<evidence type="ECO:0000255" key="1">
    <source>
        <dbReference type="HAMAP-Rule" id="MF_00235"/>
    </source>
</evidence>
<comment type="function">
    <text evidence="1">Catalyzes the reversible transfer of the terminal phosphate group between ATP and AMP. Plays an important role in cellular energy homeostasis and in adenine nucleotide metabolism.</text>
</comment>
<comment type="catalytic activity">
    <reaction evidence="1">
        <text>AMP + ATP = 2 ADP</text>
        <dbReference type="Rhea" id="RHEA:12973"/>
        <dbReference type="ChEBI" id="CHEBI:30616"/>
        <dbReference type="ChEBI" id="CHEBI:456215"/>
        <dbReference type="ChEBI" id="CHEBI:456216"/>
        <dbReference type="EC" id="2.7.4.3"/>
    </reaction>
</comment>
<comment type="pathway">
    <text evidence="1">Purine metabolism; AMP biosynthesis via salvage pathway; AMP from ADP: step 1/1.</text>
</comment>
<comment type="subunit">
    <text evidence="1">Monomer.</text>
</comment>
<comment type="subcellular location">
    <subcellularLocation>
        <location evidence="1">Cytoplasm</location>
    </subcellularLocation>
</comment>
<comment type="domain">
    <text evidence="1">Consists of three domains, a large central CORE domain and two small peripheral domains, NMPbind and LID, which undergo movements during catalysis. The LID domain closes over the site of phosphoryl transfer upon ATP binding. Assembling and dissambling the active center during each catalytic cycle provides an effective means to prevent ATP hydrolysis. Some bacteria have evolved a zinc-coordinating structure that stabilizes the LID domain.</text>
</comment>
<comment type="similarity">
    <text evidence="1">Belongs to the adenylate kinase family.</text>
</comment>
<accession>Q9PQP0</accession>
<keyword id="KW-0067">ATP-binding</keyword>
<keyword id="KW-0963">Cytoplasm</keyword>
<keyword id="KW-0418">Kinase</keyword>
<keyword id="KW-0479">Metal-binding</keyword>
<keyword id="KW-0545">Nucleotide biosynthesis</keyword>
<keyword id="KW-0547">Nucleotide-binding</keyword>
<keyword id="KW-1185">Reference proteome</keyword>
<keyword id="KW-0808">Transferase</keyword>
<keyword id="KW-0862">Zinc</keyword>
<feature type="chain" id="PRO_0000158881" description="Adenylate kinase">
    <location>
        <begin position="1"/>
        <end position="213"/>
    </location>
</feature>
<feature type="region of interest" description="NMP" evidence="1">
    <location>
        <begin position="30"/>
        <end position="60"/>
    </location>
</feature>
<feature type="region of interest" description="LID" evidence="1">
    <location>
        <begin position="123"/>
        <end position="160"/>
    </location>
</feature>
<feature type="binding site" evidence="1">
    <location>
        <begin position="10"/>
        <end position="15"/>
    </location>
    <ligand>
        <name>ATP</name>
        <dbReference type="ChEBI" id="CHEBI:30616"/>
    </ligand>
</feature>
<feature type="binding site" evidence="1">
    <location>
        <position position="31"/>
    </location>
    <ligand>
        <name>AMP</name>
        <dbReference type="ChEBI" id="CHEBI:456215"/>
    </ligand>
</feature>
<feature type="binding site" evidence="1">
    <location>
        <position position="36"/>
    </location>
    <ligand>
        <name>AMP</name>
        <dbReference type="ChEBI" id="CHEBI:456215"/>
    </ligand>
</feature>
<feature type="binding site" evidence="1">
    <location>
        <begin position="58"/>
        <end position="60"/>
    </location>
    <ligand>
        <name>AMP</name>
        <dbReference type="ChEBI" id="CHEBI:456215"/>
    </ligand>
</feature>
<feature type="binding site" evidence="1">
    <location>
        <begin position="87"/>
        <end position="90"/>
    </location>
    <ligand>
        <name>AMP</name>
        <dbReference type="ChEBI" id="CHEBI:456215"/>
    </ligand>
</feature>
<feature type="binding site" evidence="1">
    <location>
        <position position="94"/>
    </location>
    <ligand>
        <name>AMP</name>
        <dbReference type="ChEBI" id="CHEBI:456215"/>
    </ligand>
</feature>
<feature type="binding site" evidence="1">
    <location>
        <position position="124"/>
    </location>
    <ligand>
        <name>ATP</name>
        <dbReference type="ChEBI" id="CHEBI:30616"/>
    </ligand>
</feature>
<feature type="binding site" evidence="1">
    <location>
        <position position="127"/>
    </location>
    <ligand>
        <name>Zn(2+)</name>
        <dbReference type="ChEBI" id="CHEBI:29105"/>
        <note>structural</note>
    </ligand>
</feature>
<feature type="binding site" evidence="1">
    <location>
        <position position="130"/>
    </location>
    <ligand>
        <name>Zn(2+)</name>
        <dbReference type="ChEBI" id="CHEBI:29105"/>
        <note>structural</note>
    </ligand>
</feature>
<feature type="binding site" evidence="1">
    <location>
        <begin position="133"/>
        <end position="134"/>
    </location>
    <ligand>
        <name>ATP</name>
        <dbReference type="ChEBI" id="CHEBI:30616"/>
    </ligand>
</feature>
<feature type="binding site" evidence="1">
    <location>
        <position position="147"/>
    </location>
    <ligand>
        <name>Zn(2+)</name>
        <dbReference type="ChEBI" id="CHEBI:29105"/>
        <note>structural</note>
    </ligand>
</feature>
<feature type="binding site" evidence="1">
    <location>
        <position position="150"/>
    </location>
    <ligand>
        <name>Zn(2+)</name>
        <dbReference type="ChEBI" id="CHEBI:29105"/>
        <note>structural</note>
    </ligand>
</feature>
<feature type="binding site" evidence="1">
    <location>
        <position position="157"/>
    </location>
    <ligand>
        <name>AMP</name>
        <dbReference type="ChEBI" id="CHEBI:456215"/>
    </ligand>
</feature>
<feature type="binding site" evidence="1">
    <location>
        <position position="168"/>
    </location>
    <ligand>
        <name>AMP</name>
        <dbReference type="ChEBI" id="CHEBI:456215"/>
    </ligand>
</feature>
<feature type="binding site" evidence="1">
    <location>
        <position position="196"/>
    </location>
    <ligand>
        <name>ATP</name>
        <dbReference type="ChEBI" id="CHEBI:30616"/>
    </ligand>
</feature>
<sequence>MKILLIGPPGSGKGSVSELLTKNNTLKHVSTGNLFRAILKEDSELARKIKEINVSGGKLVPDEITNQVAKSAIDELIKNEQSFILDGYPRTINQALALEQYCNLDYIFYLDIDHQELMKRLTGRWMCPKCAGIYNIHFKKPQVHGLCDNDQATLYQRADDHADAVSIRLDEYDKLTLPLIKHYETNPRFIKINANQPIEDVYKNINNYLKQNK</sequence>